<sequence>MTTMPDMQKTSDTRKIPINKVGVKDISYPIVVMDKNKKFQQTVARINMYVDLPHHFKGTHMSRFVEILNAYREDIALDKMEPILQKMKEKLGASSAHLEIEFPYFIEKRAPVSGARSLMEYTCTFCGSLGEEFDFVLGVQIPVTSLCPCSKELSRYGAHNQRSHITVRLRYTDFIWIEDLVAMIEECGSSPVWSLLKRVDEQYVTERAYENPKFVEDIVREVTQKLLAHDAITWFSVEAENFESIHKHSAYAAIERDKKMT</sequence>
<protein>
    <recommendedName>
        <fullName evidence="1">GTP cyclohydrolase FolE2</fullName>
        <ecNumber evidence="1">3.5.4.16</ecNumber>
    </recommendedName>
</protein>
<keyword id="KW-0378">Hydrolase</keyword>
<keyword id="KW-1185">Reference proteome</keyword>
<evidence type="ECO:0000255" key="1">
    <source>
        <dbReference type="HAMAP-Rule" id="MF_01527"/>
    </source>
</evidence>
<accession>Q39R36</accession>
<comment type="function">
    <text evidence="1">Converts GTP to 7,8-dihydroneopterin triphosphate.</text>
</comment>
<comment type="catalytic activity">
    <reaction evidence="1">
        <text>GTP + H2O = 7,8-dihydroneopterin 3'-triphosphate + formate + H(+)</text>
        <dbReference type="Rhea" id="RHEA:17473"/>
        <dbReference type="ChEBI" id="CHEBI:15377"/>
        <dbReference type="ChEBI" id="CHEBI:15378"/>
        <dbReference type="ChEBI" id="CHEBI:15740"/>
        <dbReference type="ChEBI" id="CHEBI:37565"/>
        <dbReference type="ChEBI" id="CHEBI:58462"/>
        <dbReference type="EC" id="3.5.4.16"/>
    </reaction>
</comment>
<comment type="pathway">
    <text evidence="1">Cofactor biosynthesis; 7,8-dihydroneopterin triphosphate biosynthesis; 7,8-dihydroneopterin triphosphate from GTP: step 1/1.</text>
</comment>
<comment type="similarity">
    <text evidence="1">Belongs to the GTP cyclohydrolase IV family.</text>
</comment>
<feature type="chain" id="PRO_0000289491" description="GTP cyclohydrolase FolE2">
    <location>
        <begin position="1"/>
        <end position="261"/>
    </location>
</feature>
<feature type="site" description="May be catalytically important" evidence="1">
    <location>
        <position position="147"/>
    </location>
</feature>
<organism>
    <name type="scientific">Geobacter metallireducens (strain ATCC 53774 / DSM 7210 / GS-15)</name>
    <dbReference type="NCBI Taxonomy" id="269799"/>
    <lineage>
        <taxon>Bacteria</taxon>
        <taxon>Pseudomonadati</taxon>
        <taxon>Thermodesulfobacteriota</taxon>
        <taxon>Desulfuromonadia</taxon>
        <taxon>Geobacterales</taxon>
        <taxon>Geobacteraceae</taxon>
        <taxon>Geobacter</taxon>
    </lineage>
</organism>
<proteinExistence type="inferred from homology"/>
<reference key="1">
    <citation type="journal article" date="2009" name="BMC Microbiol.">
        <title>The genome sequence of Geobacter metallireducens: features of metabolism, physiology and regulation common and dissimilar to Geobacter sulfurreducens.</title>
        <authorList>
            <person name="Aklujkar M."/>
            <person name="Krushkal J."/>
            <person name="DiBartolo G."/>
            <person name="Lapidus A."/>
            <person name="Land M.L."/>
            <person name="Lovley D.R."/>
        </authorList>
    </citation>
    <scope>NUCLEOTIDE SEQUENCE [LARGE SCALE GENOMIC DNA]</scope>
    <source>
        <strain>ATCC 53774 / DSM 7210 / GS-15</strain>
    </source>
</reference>
<name>GCH4_GEOMG</name>
<gene>
    <name evidence="1" type="primary">folE2</name>
    <name type="ordered locus">Gmet_3074</name>
</gene>
<dbReference type="EC" id="3.5.4.16" evidence="1"/>
<dbReference type="EMBL" id="CP000148">
    <property type="protein sequence ID" value="ABB33288.1"/>
    <property type="molecule type" value="Genomic_DNA"/>
</dbReference>
<dbReference type="RefSeq" id="WP_004513633.1">
    <property type="nucleotide sequence ID" value="NC_007517.1"/>
</dbReference>
<dbReference type="SMR" id="Q39R36"/>
<dbReference type="STRING" id="269799.Gmet_3074"/>
<dbReference type="KEGG" id="gme:Gmet_3074"/>
<dbReference type="eggNOG" id="COG1469">
    <property type="taxonomic scope" value="Bacteria"/>
</dbReference>
<dbReference type="HOGENOM" id="CLU_062816_1_1_7"/>
<dbReference type="UniPathway" id="UPA00848">
    <property type="reaction ID" value="UER00151"/>
</dbReference>
<dbReference type="Proteomes" id="UP000007073">
    <property type="component" value="Chromosome"/>
</dbReference>
<dbReference type="GO" id="GO:0003934">
    <property type="term" value="F:GTP cyclohydrolase I activity"/>
    <property type="evidence" value="ECO:0007669"/>
    <property type="project" value="UniProtKB-UniRule"/>
</dbReference>
<dbReference type="GO" id="GO:0046654">
    <property type="term" value="P:tetrahydrofolate biosynthetic process"/>
    <property type="evidence" value="ECO:0007669"/>
    <property type="project" value="UniProtKB-UniRule"/>
</dbReference>
<dbReference type="Gene3D" id="3.10.270.10">
    <property type="entry name" value="Urate Oxidase"/>
    <property type="match status" value="1"/>
</dbReference>
<dbReference type="HAMAP" id="MF_01527_B">
    <property type="entry name" value="GTP_cyclohydrol_B"/>
    <property type="match status" value="1"/>
</dbReference>
<dbReference type="InterPro" id="IPR022838">
    <property type="entry name" value="GTP_cyclohydrolase_FolE2"/>
</dbReference>
<dbReference type="InterPro" id="IPR003801">
    <property type="entry name" value="GTP_cyclohydrolase_FolE2/MptA"/>
</dbReference>
<dbReference type="NCBIfam" id="NF010200">
    <property type="entry name" value="PRK13674.1-1"/>
    <property type="match status" value="1"/>
</dbReference>
<dbReference type="PANTHER" id="PTHR36445">
    <property type="entry name" value="GTP CYCLOHYDROLASE MPTA"/>
    <property type="match status" value="1"/>
</dbReference>
<dbReference type="PANTHER" id="PTHR36445:SF1">
    <property type="entry name" value="GTP CYCLOHYDROLASE MPTA"/>
    <property type="match status" value="1"/>
</dbReference>
<dbReference type="Pfam" id="PF02649">
    <property type="entry name" value="GCHY-1"/>
    <property type="match status" value="1"/>
</dbReference>